<keyword id="KW-0687">Ribonucleoprotein</keyword>
<keyword id="KW-0689">Ribosomal protein</keyword>
<keyword id="KW-0694">RNA-binding</keyword>
<keyword id="KW-0699">rRNA-binding</keyword>
<keyword id="KW-0820">tRNA-binding</keyword>
<organism>
    <name type="scientific">Streptococcus pyogenes serotype M28 (strain MGAS6180)</name>
    <dbReference type="NCBI Taxonomy" id="319701"/>
    <lineage>
        <taxon>Bacteria</taxon>
        <taxon>Bacillati</taxon>
        <taxon>Bacillota</taxon>
        <taxon>Bacilli</taxon>
        <taxon>Lactobacillales</taxon>
        <taxon>Streptococcaceae</taxon>
        <taxon>Streptococcus</taxon>
    </lineage>
</organism>
<gene>
    <name evidence="1" type="primary">rplE</name>
    <name type="ordered locus">M28_Spy0055</name>
</gene>
<sequence>MANRLKEKYTNEVIPALTEKFNYTSVMAVPKVEKIVLNMGVGDAVSNAKNLEKAAAELALISGQKPLITKAKKSIAGFRLREGVAIGAKVTLRGERMYEFLDKLVSVSLPRVRDFHGVPTKSFDGRGNYTLGVKEQLIFPEISFDDVDKVRGLDIVIVTTANTDEESRELLKGLGMPFAK</sequence>
<evidence type="ECO:0000255" key="1">
    <source>
        <dbReference type="HAMAP-Rule" id="MF_01333"/>
    </source>
</evidence>
<evidence type="ECO:0000305" key="2"/>
<reference key="1">
    <citation type="journal article" date="2005" name="J. Infect. Dis.">
        <title>Genome sequence of a serotype M28 strain of group A Streptococcus: potential new insights into puerperal sepsis and bacterial disease specificity.</title>
        <authorList>
            <person name="Green N.M."/>
            <person name="Zhang S."/>
            <person name="Porcella S.F."/>
            <person name="Nagiec M.J."/>
            <person name="Barbian K.D."/>
            <person name="Beres S.B."/>
            <person name="Lefebvre R.B."/>
            <person name="Musser J.M."/>
        </authorList>
    </citation>
    <scope>NUCLEOTIDE SEQUENCE [LARGE SCALE GENOMIC DNA]</scope>
    <source>
        <strain>MGAS6180</strain>
    </source>
</reference>
<protein>
    <recommendedName>
        <fullName evidence="1">Large ribosomal subunit protein uL5</fullName>
    </recommendedName>
    <alternativeName>
        <fullName evidence="2">50S ribosomal protein L5</fullName>
    </alternativeName>
</protein>
<proteinExistence type="inferred from homology"/>
<name>RL5_STRPM</name>
<dbReference type="EMBL" id="CP000056">
    <property type="protein sequence ID" value="AAX71169.1"/>
    <property type="molecule type" value="Genomic_DNA"/>
</dbReference>
<dbReference type="RefSeq" id="WP_002986634.1">
    <property type="nucleotide sequence ID" value="NC_007296.2"/>
</dbReference>
<dbReference type="SMR" id="Q48VT7"/>
<dbReference type="GeneID" id="69900038"/>
<dbReference type="KEGG" id="spb:M28_Spy0055"/>
<dbReference type="HOGENOM" id="CLU_061015_2_1_9"/>
<dbReference type="GO" id="GO:1990904">
    <property type="term" value="C:ribonucleoprotein complex"/>
    <property type="evidence" value="ECO:0007669"/>
    <property type="project" value="UniProtKB-KW"/>
</dbReference>
<dbReference type="GO" id="GO:0005840">
    <property type="term" value="C:ribosome"/>
    <property type="evidence" value="ECO:0007669"/>
    <property type="project" value="UniProtKB-KW"/>
</dbReference>
<dbReference type="GO" id="GO:0019843">
    <property type="term" value="F:rRNA binding"/>
    <property type="evidence" value="ECO:0007669"/>
    <property type="project" value="UniProtKB-UniRule"/>
</dbReference>
<dbReference type="GO" id="GO:0003735">
    <property type="term" value="F:structural constituent of ribosome"/>
    <property type="evidence" value="ECO:0007669"/>
    <property type="project" value="InterPro"/>
</dbReference>
<dbReference type="GO" id="GO:0000049">
    <property type="term" value="F:tRNA binding"/>
    <property type="evidence" value="ECO:0007669"/>
    <property type="project" value="UniProtKB-UniRule"/>
</dbReference>
<dbReference type="GO" id="GO:0006412">
    <property type="term" value="P:translation"/>
    <property type="evidence" value="ECO:0007669"/>
    <property type="project" value="UniProtKB-UniRule"/>
</dbReference>
<dbReference type="FunFam" id="3.30.1440.10:FF:000001">
    <property type="entry name" value="50S ribosomal protein L5"/>
    <property type="match status" value="1"/>
</dbReference>
<dbReference type="Gene3D" id="3.30.1440.10">
    <property type="match status" value="1"/>
</dbReference>
<dbReference type="HAMAP" id="MF_01333_B">
    <property type="entry name" value="Ribosomal_uL5_B"/>
    <property type="match status" value="1"/>
</dbReference>
<dbReference type="InterPro" id="IPR002132">
    <property type="entry name" value="Ribosomal_uL5"/>
</dbReference>
<dbReference type="InterPro" id="IPR020930">
    <property type="entry name" value="Ribosomal_uL5_bac-type"/>
</dbReference>
<dbReference type="InterPro" id="IPR031309">
    <property type="entry name" value="Ribosomal_uL5_C"/>
</dbReference>
<dbReference type="InterPro" id="IPR020929">
    <property type="entry name" value="Ribosomal_uL5_CS"/>
</dbReference>
<dbReference type="InterPro" id="IPR022803">
    <property type="entry name" value="Ribosomal_uL5_dom_sf"/>
</dbReference>
<dbReference type="InterPro" id="IPR031310">
    <property type="entry name" value="Ribosomal_uL5_N"/>
</dbReference>
<dbReference type="NCBIfam" id="NF000585">
    <property type="entry name" value="PRK00010.1"/>
    <property type="match status" value="1"/>
</dbReference>
<dbReference type="PANTHER" id="PTHR11994">
    <property type="entry name" value="60S RIBOSOMAL PROTEIN L11-RELATED"/>
    <property type="match status" value="1"/>
</dbReference>
<dbReference type="Pfam" id="PF00281">
    <property type="entry name" value="Ribosomal_L5"/>
    <property type="match status" value="1"/>
</dbReference>
<dbReference type="Pfam" id="PF00673">
    <property type="entry name" value="Ribosomal_L5_C"/>
    <property type="match status" value="1"/>
</dbReference>
<dbReference type="PIRSF" id="PIRSF002161">
    <property type="entry name" value="Ribosomal_L5"/>
    <property type="match status" value="1"/>
</dbReference>
<dbReference type="SUPFAM" id="SSF55282">
    <property type="entry name" value="RL5-like"/>
    <property type="match status" value="1"/>
</dbReference>
<dbReference type="PROSITE" id="PS00358">
    <property type="entry name" value="RIBOSOMAL_L5"/>
    <property type="match status" value="1"/>
</dbReference>
<accession>Q48VT7</accession>
<comment type="function">
    <text evidence="1">This is one of the proteins that bind and probably mediate the attachment of the 5S RNA into the large ribosomal subunit, where it forms part of the central protuberance. In the 70S ribosome it contacts protein S13 of the 30S subunit (bridge B1b), connecting the 2 subunits; this bridge is implicated in subunit movement. Contacts the P site tRNA; the 5S rRNA and some of its associated proteins might help stabilize positioning of ribosome-bound tRNAs.</text>
</comment>
<comment type="subunit">
    <text evidence="1">Part of the 50S ribosomal subunit; part of the 5S rRNA/L5/L18/L25 subcomplex. Contacts the 5S rRNA and the P site tRNA. Forms a bridge to the 30S subunit in the 70S ribosome.</text>
</comment>
<comment type="similarity">
    <text evidence="1">Belongs to the universal ribosomal protein uL5 family.</text>
</comment>
<feature type="chain" id="PRO_0000243070" description="Large ribosomal subunit protein uL5">
    <location>
        <begin position="1"/>
        <end position="180"/>
    </location>
</feature>